<evidence type="ECO:0000255" key="1">
    <source>
        <dbReference type="HAMAP-Rule" id="MF_00445"/>
    </source>
</evidence>
<evidence type="ECO:0000269" key="2">
    <source>
    </source>
</evidence>
<evidence type="ECO:0000269" key="3">
    <source>
    </source>
</evidence>
<feature type="chain" id="PRO_0000391299" description="NAD(P)H-quinone oxidoreductase subunit 2 B, chloroplastic">
    <location>
        <begin position="1"/>
        <end position="510"/>
    </location>
</feature>
<feature type="transmembrane region" description="Helical" evidence="1">
    <location>
        <begin position="31"/>
        <end position="51"/>
    </location>
</feature>
<feature type="transmembrane region" description="Helical" evidence="1">
    <location>
        <begin position="59"/>
        <end position="79"/>
    </location>
</feature>
<feature type="transmembrane region" description="Helical" evidence="1">
    <location>
        <begin position="99"/>
        <end position="119"/>
    </location>
</feature>
<feature type="transmembrane region" description="Helical" evidence="1">
    <location>
        <begin position="124"/>
        <end position="144"/>
    </location>
</feature>
<feature type="transmembrane region" description="Helical" evidence="1">
    <location>
        <begin position="149"/>
        <end position="169"/>
    </location>
</feature>
<feature type="transmembrane region" description="Helical" evidence="1">
    <location>
        <begin position="184"/>
        <end position="204"/>
    </location>
</feature>
<feature type="transmembrane region" description="Helical" evidence="1">
    <location>
        <begin position="229"/>
        <end position="249"/>
    </location>
</feature>
<feature type="transmembrane region" description="Helical" evidence="1">
    <location>
        <begin position="261"/>
        <end position="281"/>
    </location>
</feature>
<feature type="transmembrane region" description="Helical" evidence="1">
    <location>
        <begin position="295"/>
        <end position="315"/>
    </location>
</feature>
<feature type="transmembrane region" description="Helical" evidence="1">
    <location>
        <begin position="323"/>
        <end position="343"/>
    </location>
</feature>
<feature type="transmembrane region" description="Helical" evidence="1">
    <location>
        <begin position="354"/>
        <end position="374"/>
    </location>
</feature>
<feature type="transmembrane region" description="Helical" evidence="1">
    <location>
        <begin position="395"/>
        <end position="415"/>
    </location>
</feature>
<feature type="transmembrane region" description="Helical" evidence="1">
    <location>
        <begin position="418"/>
        <end position="438"/>
    </location>
</feature>
<feature type="transmembrane region" description="Helical" evidence="1">
    <location>
        <begin position="484"/>
        <end position="504"/>
    </location>
</feature>
<gene>
    <name evidence="1" type="primary">ndhB2</name>
</gene>
<geneLocation type="chloroplast"/>
<accession>P0CD23</accession>
<accession>P12125</accession>
<organism>
    <name type="scientific">Oryza sativa subsp. japonica</name>
    <name type="common">Rice</name>
    <dbReference type="NCBI Taxonomy" id="39947"/>
    <lineage>
        <taxon>Eukaryota</taxon>
        <taxon>Viridiplantae</taxon>
        <taxon>Streptophyta</taxon>
        <taxon>Embryophyta</taxon>
        <taxon>Tracheophyta</taxon>
        <taxon>Spermatophyta</taxon>
        <taxon>Magnoliopsida</taxon>
        <taxon>Liliopsida</taxon>
        <taxon>Poales</taxon>
        <taxon>Poaceae</taxon>
        <taxon>BOP clade</taxon>
        <taxon>Oryzoideae</taxon>
        <taxon>Oryzeae</taxon>
        <taxon>Oryzinae</taxon>
        <taxon>Oryza</taxon>
        <taxon>Oryza sativa</taxon>
    </lineage>
</organism>
<reference key="1">
    <citation type="journal article" date="1995" name="Plant Mol. Biol.">
        <title>Editing of the chloroplast ndhB encoded transcript shows divergence between closely related members of the grass family (Poaceae).</title>
        <authorList>
            <person name="Freyer R."/>
            <person name="Lopez C."/>
            <person name="Maier R.M."/>
            <person name="Martin M."/>
            <person name="Sabater B."/>
            <person name="Koessel H."/>
        </authorList>
    </citation>
    <scope>NUCLEOTIDE SEQUENCE [GENOMIC DNA]</scope>
    <scope>RNA EDITING</scope>
</reference>
<reference key="2">
    <citation type="journal article" date="2000" name="Mol. Gen. Genet.">
        <title>Conservation of RNA editing between rice and maize plastids: are most editing events dispensable?</title>
        <authorList>
            <person name="Corneille S."/>
            <person name="Lutz K."/>
            <person name="Maliga P."/>
        </authorList>
    </citation>
    <scope>NUCLEOTIDE SEQUENCE [GENOMIC DNA]</scope>
    <scope>RNA EDITING</scope>
    <source>
        <strain>cv. Taipei 309</strain>
    </source>
</reference>
<reference key="3">
    <citation type="journal article" date="1989" name="Mol. Gen. Genet.">
        <title>The complete sequence of the rice (Oryza sativa) chloroplast genome: intermolecular recombination between distinct tRNA genes accounts for a major plastid DNA inversion during the evolution of the cereals.</title>
        <authorList>
            <person name="Hiratsuka J."/>
            <person name="Shimada H."/>
            <person name="Whittier R."/>
            <person name="Ishibashi T."/>
            <person name="Sakamoto M."/>
            <person name="Mori M."/>
            <person name="Kondo C."/>
            <person name="Honji Y."/>
            <person name="Sun C.-R."/>
            <person name="Meng B.-Y."/>
            <person name="Li Y.-Q."/>
            <person name="Kanno A."/>
            <person name="Nishizawa Y."/>
            <person name="Hirai A."/>
            <person name="Shinozaki K."/>
            <person name="Sugiura M."/>
        </authorList>
    </citation>
    <scope>NUCLEOTIDE SEQUENCE [LARGE SCALE GENOMIC DNA]</scope>
    <source>
        <strain>cv. Nipponbare</strain>
    </source>
</reference>
<reference key="4">
    <citation type="journal article" date="2004" name="Plant Physiol.">
        <title>A comparison of rice chloroplast genomes.</title>
        <authorList>
            <person name="Tang J."/>
            <person name="Xia H."/>
            <person name="Cao M."/>
            <person name="Zhang X."/>
            <person name="Zeng W."/>
            <person name="Hu S."/>
            <person name="Tong W."/>
            <person name="Wang J."/>
            <person name="Wang J."/>
            <person name="Yu J."/>
            <person name="Yang H."/>
            <person name="Zhu L."/>
        </authorList>
    </citation>
    <scope>NUCLEOTIDE SEQUENCE [LARGE SCALE GENOMIC DNA]</scope>
    <source>
        <strain>cv. Nipponbare</strain>
    </source>
</reference>
<keyword id="KW-0150">Chloroplast</keyword>
<keyword id="KW-0472">Membrane</keyword>
<keyword id="KW-0520">NAD</keyword>
<keyword id="KW-0521">NADP</keyword>
<keyword id="KW-0934">Plastid</keyword>
<keyword id="KW-0618">Plastoquinone</keyword>
<keyword id="KW-0874">Quinone</keyword>
<keyword id="KW-1185">Reference proteome</keyword>
<keyword id="KW-0691">RNA editing</keyword>
<keyword id="KW-0793">Thylakoid</keyword>
<keyword id="KW-1278">Translocase</keyword>
<keyword id="KW-0812">Transmembrane</keyword>
<keyword id="KW-1133">Transmembrane helix</keyword>
<keyword id="KW-0813">Transport</keyword>
<name>NU2C2_ORYSJ</name>
<comment type="function">
    <text evidence="1">NDH shuttles electrons from NAD(P)H:plastoquinone, via FMN and iron-sulfur (Fe-S) centers, to quinones in the photosynthetic chain and possibly in a chloroplast respiratory chain. The immediate electron acceptor for the enzyme in this species is believed to be plastoquinone. Couples the redox reaction to proton translocation, and thus conserves the redox energy in a proton gradient.</text>
</comment>
<comment type="catalytic activity">
    <reaction evidence="1">
        <text>a plastoquinone + NADH + (n+1) H(+)(in) = a plastoquinol + NAD(+) + n H(+)(out)</text>
        <dbReference type="Rhea" id="RHEA:42608"/>
        <dbReference type="Rhea" id="RHEA-COMP:9561"/>
        <dbReference type="Rhea" id="RHEA-COMP:9562"/>
        <dbReference type="ChEBI" id="CHEBI:15378"/>
        <dbReference type="ChEBI" id="CHEBI:17757"/>
        <dbReference type="ChEBI" id="CHEBI:57540"/>
        <dbReference type="ChEBI" id="CHEBI:57945"/>
        <dbReference type="ChEBI" id="CHEBI:62192"/>
    </reaction>
</comment>
<comment type="catalytic activity">
    <reaction evidence="1">
        <text>a plastoquinone + NADPH + (n+1) H(+)(in) = a plastoquinol + NADP(+) + n H(+)(out)</text>
        <dbReference type="Rhea" id="RHEA:42612"/>
        <dbReference type="Rhea" id="RHEA-COMP:9561"/>
        <dbReference type="Rhea" id="RHEA-COMP:9562"/>
        <dbReference type="ChEBI" id="CHEBI:15378"/>
        <dbReference type="ChEBI" id="CHEBI:17757"/>
        <dbReference type="ChEBI" id="CHEBI:57783"/>
        <dbReference type="ChEBI" id="CHEBI:58349"/>
        <dbReference type="ChEBI" id="CHEBI:62192"/>
    </reaction>
</comment>
<comment type="subunit">
    <text evidence="1">NDH is composed of at least 16 different subunits, 5 of which are encoded in the nucleus.</text>
</comment>
<comment type="subcellular location">
    <subcellularLocation>
        <location evidence="1">Plastid</location>
        <location evidence="1">Chloroplast thylakoid membrane</location>
        <topology evidence="1">Multi-pass membrane protein</topology>
    </subcellularLocation>
</comment>
<comment type="RNA editing">
    <location>
        <position position="156" evidence="2 3"/>
    </location>
    <location>
        <position position="196" evidence="2 3"/>
    </location>
    <location>
        <position position="204" evidence="2 3"/>
    </location>
    <location>
        <position position="235" evidence="2 3"/>
    </location>
    <location>
        <position position="246" evidence="2 3"/>
    </location>
    <location>
        <position position="277" evidence="2 3"/>
    </location>
    <location>
        <position position="279" evidence="2 3"/>
    </location>
    <location>
        <position position="494" evidence="2 3"/>
    </location>
</comment>
<comment type="similarity">
    <text evidence="1">Belongs to the complex I subunit 2 family.</text>
</comment>
<sequence length="510" mass="56981">MIWHVQNENFILDSTRIFMKAFHLLLFQGSFIFPECILIFGLILLLMIDLTSDQKDRPWFYFISSTSLVISITALLFRWREEPIISFSGNFQTNNFNEIFQFLILLCSTLCIPLSVEYIECTEMAITEFLLFVLTATLGGMFLCGANDLITIFVALECFSLCSYLLSGYTKRDLRSNEATMKYLLMGGASSSILVYGFSWLYGLSGGEIELQEIVNGLINTQMYNSPGISIALIFITVGLGFKLSLAPFHQWTPDVYEGSPTPVVAFLSVTSKVAALALATRILDIPFYFSSNEWHLLLEILAILSMILGNLLAITQTSMKRMLAYSSIGQIGYVIIGIIVGDSNDGYASMITYMLFYISMNLGTFACIVLFGLRTGTDNIRDYAGLYTKDPFLALSLALCLLSLGGLPPLAGFFGKLYLFWCGWQAGLYFLVSIGLLTSVLSIYYYLKIVKLLMTGRNQEITPYVRNYRRSPLRSNNSIELSMTVCVIASTILGISMNPILAIAQDTLF</sequence>
<protein>
    <recommendedName>
        <fullName evidence="1">NAD(P)H-quinone oxidoreductase subunit 2 B, chloroplastic</fullName>
        <ecNumber evidence="1">7.1.1.-</ecNumber>
    </recommendedName>
    <alternativeName>
        <fullName evidence="1">NAD(P)H dehydrogenase, subunit 2 B</fullName>
    </alternativeName>
    <alternativeName>
        <fullName evidence="1">NADH-plastoquinone oxidoreductase subunit 2 B</fullName>
    </alternativeName>
</protein>
<dbReference type="EC" id="7.1.1.-" evidence="1"/>
<dbReference type="EMBL" id="X15901">
    <property type="protein sequence ID" value="CAA33941.1"/>
    <property type="status" value="ALT_SEQ"/>
    <property type="molecule type" value="Genomic_DNA"/>
</dbReference>
<dbReference type="EMBL" id="AY522330">
    <property type="status" value="NOT_ANNOTATED_CDS"/>
    <property type="molecule type" value="Genomic_DNA"/>
</dbReference>
<dbReference type="PIR" id="JQ0275">
    <property type="entry name" value="DERZN2"/>
</dbReference>
<dbReference type="SMR" id="P0CD23"/>
<dbReference type="FunCoup" id="P0CD23">
    <property type="interactions" value="18"/>
</dbReference>
<dbReference type="STRING" id="39947.P0CD23"/>
<dbReference type="PaxDb" id="39947-P0CD23"/>
<dbReference type="KEGG" id="dosa:ndhB"/>
<dbReference type="KEGG" id="osa:3131396"/>
<dbReference type="KEGG" id="osa:3131397"/>
<dbReference type="InParanoid" id="P0CD23"/>
<dbReference type="OrthoDB" id="783395at2759"/>
<dbReference type="Proteomes" id="UP000059680">
    <property type="component" value="Chloroplast"/>
</dbReference>
<dbReference type="GO" id="GO:0009535">
    <property type="term" value="C:chloroplast thylakoid membrane"/>
    <property type="evidence" value="ECO:0007669"/>
    <property type="project" value="UniProtKB-SubCell"/>
</dbReference>
<dbReference type="GO" id="GO:0008137">
    <property type="term" value="F:NADH dehydrogenase (ubiquinone) activity"/>
    <property type="evidence" value="ECO:0007669"/>
    <property type="project" value="InterPro"/>
</dbReference>
<dbReference type="GO" id="GO:0048038">
    <property type="term" value="F:quinone binding"/>
    <property type="evidence" value="ECO:0007669"/>
    <property type="project" value="UniProtKB-KW"/>
</dbReference>
<dbReference type="GO" id="GO:0042773">
    <property type="term" value="P:ATP synthesis coupled electron transport"/>
    <property type="evidence" value="ECO:0007669"/>
    <property type="project" value="InterPro"/>
</dbReference>
<dbReference type="GO" id="GO:0019684">
    <property type="term" value="P:photosynthesis, light reaction"/>
    <property type="evidence" value="ECO:0007669"/>
    <property type="project" value="UniProtKB-UniRule"/>
</dbReference>
<dbReference type="HAMAP" id="MF_00445">
    <property type="entry name" value="NDH1_NuoN_1"/>
    <property type="match status" value="1"/>
</dbReference>
<dbReference type="InterPro" id="IPR010096">
    <property type="entry name" value="NADH-Q_OxRdtase_suN/2"/>
</dbReference>
<dbReference type="InterPro" id="IPR001750">
    <property type="entry name" value="ND/Mrp_TM"/>
</dbReference>
<dbReference type="InterPro" id="IPR045693">
    <property type="entry name" value="Ndh2_N"/>
</dbReference>
<dbReference type="NCBIfam" id="TIGR01770">
    <property type="entry name" value="NDH_I_N"/>
    <property type="match status" value="1"/>
</dbReference>
<dbReference type="NCBIfam" id="NF002701">
    <property type="entry name" value="PRK02504.1"/>
    <property type="match status" value="1"/>
</dbReference>
<dbReference type="PANTHER" id="PTHR22773">
    <property type="entry name" value="NADH DEHYDROGENASE"/>
    <property type="match status" value="1"/>
</dbReference>
<dbReference type="Pfam" id="PF19530">
    <property type="entry name" value="Ndh2_N"/>
    <property type="match status" value="1"/>
</dbReference>
<dbReference type="Pfam" id="PF00361">
    <property type="entry name" value="Proton_antipo_M"/>
    <property type="match status" value="1"/>
</dbReference>
<dbReference type="PRINTS" id="PR01434">
    <property type="entry name" value="NADHDHGNASE5"/>
</dbReference>
<proteinExistence type="evidence at transcript level"/>